<evidence type="ECO:0000250" key="1"/>
<evidence type="ECO:0000255" key="2"/>
<evidence type="ECO:0000305" key="3"/>
<dbReference type="EMBL" id="AE005674">
    <property type="protein sequence ID" value="AAN42666.2"/>
    <property type="molecule type" value="Genomic_DNA"/>
</dbReference>
<dbReference type="EMBL" id="AE014073">
    <property type="protein sequence ID" value="AAP16550.1"/>
    <property type="molecule type" value="Genomic_DNA"/>
</dbReference>
<dbReference type="RefSeq" id="NP_706959.2">
    <property type="nucleotide sequence ID" value="NC_004337.2"/>
</dbReference>
<dbReference type="RefSeq" id="WP_011069327.1">
    <property type="nucleotide sequence ID" value="NZ_WPGW01000143.1"/>
</dbReference>
<dbReference type="SMR" id="Q83RU3"/>
<dbReference type="STRING" id="198214.SF1044"/>
<dbReference type="PaxDb" id="198214-SF1044"/>
<dbReference type="GeneID" id="1023993"/>
<dbReference type="KEGG" id="sfl:SF1044"/>
<dbReference type="KEGG" id="sfx:S1118"/>
<dbReference type="PATRIC" id="fig|198214.7.peg.1218"/>
<dbReference type="HOGENOM" id="CLU_023403_2_0_6"/>
<dbReference type="UniPathway" id="UPA00637"/>
<dbReference type="Proteomes" id="UP000001006">
    <property type="component" value="Chromosome"/>
</dbReference>
<dbReference type="Proteomes" id="UP000002673">
    <property type="component" value="Chromosome"/>
</dbReference>
<dbReference type="GO" id="GO:0030288">
    <property type="term" value="C:outer membrane-bounded periplasmic space"/>
    <property type="evidence" value="ECO:0007669"/>
    <property type="project" value="TreeGrafter"/>
</dbReference>
<dbReference type="GO" id="GO:0030246">
    <property type="term" value="F:carbohydrate binding"/>
    <property type="evidence" value="ECO:0007669"/>
    <property type="project" value="InterPro"/>
</dbReference>
<dbReference type="GO" id="GO:0003824">
    <property type="term" value="F:catalytic activity"/>
    <property type="evidence" value="ECO:0007669"/>
    <property type="project" value="InterPro"/>
</dbReference>
<dbReference type="GO" id="GO:0051274">
    <property type="term" value="P:beta-glucan biosynthetic process"/>
    <property type="evidence" value="ECO:0007669"/>
    <property type="project" value="TreeGrafter"/>
</dbReference>
<dbReference type="FunFam" id="2.60.40.10:FF:000294">
    <property type="entry name" value="Glucans biosynthesis protein G"/>
    <property type="match status" value="1"/>
</dbReference>
<dbReference type="FunFam" id="2.70.98.10:FF:000001">
    <property type="entry name" value="Glucans biosynthesis protein G"/>
    <property type="match status" value="1"/>
</dbReference>
<dbReference type="Gene3D" id="2.70.98.10">
    <property type="match status" value="1"/>
</dbReference>
<dbReference type="Gene3D" id="2.60.40.10">
    <property type="entry name" value="Immunoglobulins"/>
    <property type="match status" value="1"/>
</dbReference>
<dbReference type="HAMAP" id="MF_01069">
    <property type="entry name" value="MdoG_OpgG"/>
    <property type="match status" value="1"/>
</dbReference>
<dbReference type="InterPro" id="IPR011013">
    <property type="entry name" value="Gal_mutarotase_sf_dom"/>
</dbReference>
<dbReference type="InterPro" id="IPR014718">
    <property type="entry name" value="GH-type_carb-bd"/>
</dbReference>
<dbReference type="InterPro" id="IPR014438">
    <property type="entry name" value="Glucan_biosyn_MdoG/MdoD"/>
</dbReference>
<dbReference type="InterPro" id="IPR007444">
    <property type="entry name" value="Glucan_biosyn_MdoG_C"/>
</dbReference>
<dbReference type="InterPro" id="IPR013783">
    <property type="entry name" value="Ig-like_fold"/>
</dbReference>
<dbReference type="InterPro" id="IPR014756">
    <property type="entry name" value="Ig_E-set"/>
</dbReference>
<dbReference type="InterPro" id="IPR023704">
    <property type="entry name" value="MdoG_OpgG"/>
</dbReference>
<dbReference type="PANTHER" id="PTHR30504">
    <property type="entry name" value="GLUCANS BIOSYNTHESIS PROTEIN"/>
    <property type="match status" value="1"/>
</dbReference>
<dbReference type="PANTHER" id="PTHR30504:SF4">
    <property type="entry name" value="GLUCANS BIOSYNTHESIS PROTEIN G"/>
    <property type="match status" value="1"/>
</dbReference>
<dbReference type="Pfam" id="PF04349">
    <property type="entry name" value="MdoG"/>
    <property type="match status" value="1"/>
</dbReference>
<dbReference type="PIRSF" id="PIRSF006281">
    <property type="entry name" value="MdoG"/>
    <property type="match status" value="1"/>
</dbReference>
<dbReference type="SUPFAM" id="SSF81296">
    <property type="entry name" value="E set domains"/>
    <property type="match status" value="1"/>
</dbReference>
<dbReference type="SUPFAM" id="SSF74650">
    <property type="entry name" value="Galactose mutarotase-like"/>
    <property type="match status" value="1"/>
</dbReference>
<comment type="function">
    <text evidence="1">Involved in the biosynthesis of osmoregulated periplasmic glucans (OPGs).</text>
</comment>
<comment type="pathway">
    <text>Glycan metabolism; osmoregulated periplasmic glucan (OPG) biosynthesis.</text>
</comment>
<comment type="subcellular location">
    <subcellularLocation>
        <location evidence="1">Periplasm</location>
    </subcellularLocation>
</comment>
<comment type="similarity">
    <text evidence="3">Belongs to the OpgD/OpgG family.</text>
</comment>
<name>OPGG_SHIFL</name>
<protein>
    <recommendedName>
        <fullName>Glucans biosynthesis protein G</fullName>
    </recommendedName>
</protein>
<organism>
    <name type="scientific">Shigella flexneri</name>
    <dbReference type="NCBI Taxonomy" id="623"/>
    <lineage>
        <taxon>Bacteria</taxon>
        <taxon>Pseudomonadati</taxon>
        <taxon>Pseudomonadota</taxon>
        <taxon>Gammaproteobacteria</taxon>
        <taxon>Enterobacterales</taxon>
        <taxon>Enterobacteriaceae</taxon>
        <taxon>Shigella</taxon>
    </lineage>
</organism>
<reference key="1">
    <citation type="journal article" date="2002" name="Nucleic Acids Res.">
        <title>Genome sequence of Shigella flexneri 2a: insights into pathogenicity through comparison with genomes of Escherichia coli K12 and O157.</title>
        <authorList>
            <person name="Jin Q."/>
            <person name="Yuan Z."/>
            <person name="Xu J."/>
            <person name="Wang Y."/>
            <person name="Shen Y."/>
            <person name="Lu W."/>
            <person name="Wang J."/>
            <person name="Liu H."/>
            <person name="Yang J."/>
            <person name="Yang F."/>
            <person name="Zhang X."/>
            <person name="Zhang J."/>
            <person name="Yang G."/>
            <person name="Wu H."/>
            <person name="Qu D."/>
            <person name="Dong J."/>
            <person name="Sun L."/>
            <person name="Xue Y."/>
            <person name="Zhao A."/>
            <person name="Gao Y."/>
            <person name="Zhu J."/>
            <person name="Kan B."/>
            <person name="Ding K."/>
            <person name="Chen S."/>
            <person name="Cheng H."/>
            <person name="Yao Z."/>
            <person name="He B."/>
            <person name="Chen R."/>
            <person name="Ma D."/>
            <person name="Qiang B."/>
            <person name="Wen Y."/>
            <person name="Hou Y."/>
            <person name="Yu J."/>
        </authorList>
    </citation>
    <scope>NUCLEOTIDE SEQUENCE [LARGE SCALE GENOMIC DNA]</scope>
    <source>
        <strain>301 / Serotype 2a</strain>
    </source>
</reference>
<reference key="2">
    <citation type="journal article" date="2003" name="Infect. Immun.">
        <title>Complete genome sequence and comparative genomics of Shigella flexneri serotype 2a strain 2457T.</title>
        <authorList>
            <person name="Wei J."/>
            <person name="Goldberg M.B."/>
            <person name="Burland V."/>
            <person name="Venkatesan M.M."/>
            <person name="Deng W."/>
            <person name="Fournier G."/>
            <person name="Mayhew G.F."/>
            <person name="Plunkett G. III"/>
            <person name="Rose D.J."/>
            <person name="Darling A."/>
            <person name="Mau B."/>
            <person name="Perna N.T."/>
            <person name="Payne S.M."/>
            <person name="Runyen-Janecky L.J."/>
            <person name="Zhou S."/>
            <person name="Schwartz D.C."/>
            <person name="Blattner F.R."/>
        </authorList>
    </citation>
    <scope>NUCLEOTIDE SEQUENCE [LARGE SCALE GENOMIC DNA]</scope>
    <source>
        <strain>ATCC 700930 / 2457T / Serotype 2a</strain>
    </source>
</reference>
<feature type="signal peptide" evidence="2">
    <location>
        <begin position="1"/>
        <end position="22"/>
    </location>
</feature>
<feature type="chain" id="PRO_0000020236" description="Glucans biosynthesis protein G">
    <location>
        <begin position="23"/>
        <end position="511"/>
    </location>
</feature>
<accession>Q83RU3</accession>
<keyword id="KW-0574">Periplasm</keyword>
<keyword id="KW-1185">Reference proteome</keyword>
<keyword id="KW-0732">Signal</keyword>
<proteinExistence type="inferred from homology"/>
<gene>
    <name type="primary">mdoG</name>
    <name type="synonym">opgG</name>
    <name type="ordered locus">SF1044</name>
    <name type="ordered locus">S1118</name>
</gene>
<sequence length="511" mass="57923">MMKMRWLSAAVMLTLYTSSSWAFSIDDVAKQAQSLAGKGYEAPKSNLPSVFRDMKYADYQQIQFNHDKAYWNNLKTPFKLEFYHQGMYFDTPVKINEVTATAVKRIKYSPDYFTFGDVQHDKDTVKDLGFAGFKVLYPINSKDKNDEIVSMLGASYFRVIGAGQVYGLSARGLAIDTALPSGEEFPRFKEFWIERPKPTDKRLTIYALLDSPRATGAYKFVVMPGRDTVVDVQSKIYLRDKVGKLGVAPLTSMFLFGPNQPSPANNYRPELHDSNGLSIHAGNGEWIWRPLNNPKHLAVSSFSMENPRGFGLLQRGRDFSRFEDLDDRYDLRPSAWVTPKGEWGKGSVELVEIPTNDETNDNIVAYWTPDQLPEPGKEMNFKYTITFSRDEDKLHAPDNAWVQQTRRSTGDVKQSNLIRQPDGTIAFVVDFTGAEMKKLPEDTPVTAQTSIGDNGEIVESTVRYNPVTKGWRLVMRVKVKDAKKITEMRAALVNADQTLSETWSYQLPANE</sequence>